<feature type="chain" id="PRO_1000002381" description="Cobyric acid synthase">
    <location>
        <begin position="1"/>
        <end position="512"/>
    </location>
</feature>
<feature type="domain" description="GATase cobBQ-type" evidence="1">
    <location>
        <begin position="251"/>
        <end position="451"/>
    </location>
</feature>
<feature type="active site" description="Nucleophile" evidence="1">
    <location>
        <position position="332"/>
    </location>
</feature>
<feature type="active site" evidence="1">
    <location>
        <position position="443"/>
    </location>
</feature>
<reference key="1">
    <citation type="journal article" date="2006" name="PLoS Genet.">
        <title>The complete genome sequence and comparative genome analysis of the high pathogenicity Yersinia enterocolitica strain 8081.</title>
        <authorList>
            <person name="Thomson N.R."/>
            <person name="Howard S."/>
            <person name="Wren B.W."/>
            <person name="Holden M.T.G."/>
            <person name="Crossman L."/>
            <person name="Challis G.L."/>
            <person name="Churcher C."/>
            <person name="Mungall K."/>
            <person name="Brooks K."/>
            <person name="Chillingworth T."/>
            <person name="Feltwell T."/>
            <person name="Abdellah Z."/>
            <person name="Hauser H."/>
            <person name="Jagels K."/>
            <person name="Maddison M."/>
            <person name="Moule S."/>
            <person name="Sanders M."/>
            <person name="Whitehead S."/>
            <person name="Quail M.A."/>
            <person name="Dougan G."/>
            <person name="Parkhill J."/>
            <person name="Prentice M.B."/>
        </authorList>
    </citation>
    <scope>NUCLEOTIDE SEQUENCE [LARGE SCALE GENOMIC DNA]</scope>
    <source>
        <strain>NCTC 13174 / 8081</strain>
    </source>
</reference>
<accession>A1JTQ2</accession>
<organism>
    <name type="scientific">Yersinia enterocolitica serotype O:8 / biotype 1B (strain NCTC 13174 / 8081)</name>
    <dbReference type="NCBI Taxonomy" id="393305"/>
    <lineage>
        <taxon>Bacteria</taxon>
        <taxon>Pseudomonadati</taxon>
        <taxon>Pseudomonadota</taxon>
        <taxon>Gammaproteobacteria</taxon>
        <taxon>Enterobacterales</taxon>
        <taxon>Yersiniaceae</taxon>
        <taxon>Yersinia</taxon>
    </lineage>
</organism>
<sequence>MNLSIMVQGTASDVGKSVLVAGLCRIFMQDGYRCAPFKSQNMALNSGITPQGEEMGRAQIFQAEAAGIAPDVRMNPVLLKPTSDRKAQVVLMGKVACNMDAVEYHQYKPQLQQQISEVYHSLAREYDVMVLEGAGSPAEINLRDRDIVNMGMAEMADAPVLLVADIDRGGVFASIYGTLALLHPHEKARVKGVIINKFRGDIALLTPGLEQIEALTNVPVLGVMPWLDIDLEDEDGVALQNGKYQDTAEKALDIAVIRLPHIANFTDFNALAAQPDVRLRYVSQLSALGQPDLIILPGSKNTLGDLQWLHHSGLAAALLTLHQRNVPVIGICGGYQMLGKRIIDGVESGLEQMDGLGLLDVETEFAPDKVTTRVSGYCQIGLPGILKNCCDHPLEGYEIHMGVSHLGSAAIPFAQLTLRNGQAEQWVDGAVNGDGSVLGSYIHGLFDSHHFTRALLDSLRQRKGLAAFDGVTVNYAEHKQQQFDILASQMREHIDIDRILKLMKQHQQERAQ</sequence>
<keyword id="KW-0169">Cobalamin biosynthesis</keyword>
<keyword id="KW-0315">Glutamine amidotransferase</keyword>
<name>COBQ_YERE8</name>
<evidence type="ECO:0000255" key="1">
    <source>
        <dbReference type="HAMAP-Rule" id="MF_00028"/>
    </source>
</evidence>
<comment type="function">
    <text evidence="1">Catalyzes amidations at positions B, D, E, and G on adenosylcobyrinic A,C-diamide. NH(2) groups are provided by glutamine, and one molecule of ATP is hydrogenolyzed for each amidation.</text>
</comment>
<comment type="pathway">
    <text evidence="1">Cofactor biosynthesis; adenosylcobalamin biosynthesis.</text>
</comment>
<comment type="similarity">
    <text evidence="1">Belongs to the CobB/CobQ family. CobQ subfamily.</text>
</comment>
<proteinExistence type="inferred from homology"/>
<gene>
    <name evidence="1" type="primary">cobQ</name>
    <name type="ordered locus">YE2711</name>
</gene>
<protein>
    <recommendedName>
        <fullName evidence="1">Cobyric acid synthase</fullName>
    </recommendedName>
</protein>
<dbReference type="EMBL" id="AM286415">
    <property type="protein sequence ID" value="CAL12744.1"/>
    <property type="molecule type" value="Genomic_DNA"/>
</dbReference>
<dbReference type="RefSeq" id="WP_005168494.1">
    <property type="nucleotide sequence ID" value="NC_008800.1"/>
</dbReference>
<dbReference type="RefSeq" id="YP_001006901.1">
    <property type="nucleotide sequence ID" value="NC_008800.1"/>
</dbReference>
<dbReference type="SMR" id="A1JTQ2"/>
<dbReference type="KEGG" id="yen:YE2711"/>
<dbReference type="PATRIC" id="fig|393305.7.peg.2880"/>
<dbReference type="eggNOG" id="COG1492">
    <property type="taxonomic scope" value="Bacteria"/>
</dbReference>
<dbReference type="HOGENOM" id="CLU_019250_2_2_6"/>
<dbReference type="OrthoDB" id="9808302at2"/>
<dbReference type="UniPathway" id="UPA00148"/>
<dbReference type="Proteomes" id="UP000000642">
    <property type="component" value="Chromosome"/>
</dbReference>
<dbReference type="GO" id="GO:0015420">
    <property type="term" value="F:ABC-type vitamin B12 transporter activity"/>
    <property type="evidence" value="ECO:0007669"/>
    <property type="project" value="UniProtKB-UniRule"/>
</dbReference>
<dbReference type="GO" id="GO:0003824">
    <property type="term" value="F:catalytic activity"/>
    <property type="evidence" value="ECO:0007669"/>
    <property type="project" value="InterPro"/>
</dbReference>
<dbReference type="GO" id="GO:0009236">
    <property type="term" value="P:cobalamin biosynthetic process"/>
    <property type="evidence" value="ECO:0007669"/>
    <property type="project" value="UniProtKB-UniRule"/>
</dbReference>
<dbReference type="CDD" id="cd05389">
    <property type="entry name" value="CobQ_N"/>
    <property type="match status" value="1"/>
</dbReference>
<dbReference type="CDD" id="cd01750">
    <property type="entry name" value="GATase1_CobQ"/>
    <property type="match status" value="1"/>
</dbReference>
<dbReference type="Gene3D" id="3.40.50.880">
    <property type="match status" value="1"/>
</dbReference>
<dbReference type="Gene3D" id="3.40.50.300">
    <property type="entry name" value="P-loop containing nucleotide triphosphate hydrolases"/>
    <property type="match status" value="1"/>
</dbReference>
<dbReference type="HAMAP" id="MF_00028">
    <property type="entry name" value="CobQ"/>
    <property type="match status" value="1"/>
</dbReference>
<dbReference type="InterPro" id="IPR029062">
    <property type="entry name" value="Class_I_gatase-like"/>
</dbReference>
<dbReference type="InterPro" id="IPR002586">
    <property type="entry name" value="CobQ/CobB/MinD/ParA_Nub-bd_dom"/>
</dbReference>
<dbReference type="InterPro" id="IPR033949">
    <property type="entry name" value="CobQ_GATase1"/>
</dbReference>
<dbReference type="InterPro" id="IPR047045">
    <property type="entry name" value="CobQ_N"/>
</dbReference>
<dbReference type="InterPro" id="IPR004459">
    <property type="entry name" value="CobQ_synth"/>
</dbReference>
<dbReference type="InterPro" id="IPR011698">
    <property type="entry name" value="GATase_3"/>
</dbReference>
<dbReference type="InterPro" id="IPR027417">
    <property type="entry name" value="P-loop_NTPase"/>
</dbReference>
<dbReference type="NCBIfam" id="TIGR00313">
    <property type="entry name" value="cobQ"/>
    <property type="match status" value="1"/>
</dbReference>
<dbReference type="NCBIfam" id="NF001989">
    <property type="entry name" value="PRK00784.1"/>
    <property type="match status" value="1"/>
</dbReference>
<dbReference type="PANTHER" id="PTHR21343:SF1">
    <property type="entry name" value="COBYRIC ACID SYNTHASE"/>
    <property type="match status" value="1"/>
</dbReference>
<dbReference type="PANTHER" id="PTHR21343">
    <property type="entry name" value="DETHIOBIOTIN SYNTHETASE"/>
    <property type="match status" value="1"/>
</dbReference>
<dbReference type="Pfam" id="PF01656">
    <property type="entry name" value="CbiA"/>
    <property type="match status" value="1"/>
</dbReference>
<dbReference type="Pfam" id="PF07685">
    <property type="entry name" value="GATase_3"/>
    <property type="match status" value="1"/>
</dbReference>
<dbReference type="SUPFAM" id="SSF52317">
    <property type="entry name" value="Class I glutamine amidotransferase-like"/>
    <property type="match status" value="1"/>
</dbReference>
<dbReference type="SUPFAM" id="SSF52540">
    <property type="entry name" value="P-loop containing nucleoside triphosphate hydrolases"/>
    <property type="match status" value="1"/>
</dbReference>
<dbReference type="PROSITE" id="PS51274">
    <property type="entry name" value="GATASE_COBBQ"/>
    <property type="match status" value="1"/>
</dbReference>